<keyword id="KW-1185">Reference proteome</keyword>
<keyword id="KW-0346">Stress response</keyword>
<keyword id="KW-0808">Transferase</keyword>
<accession>P46440</accession>
<protein>
    <recommendedName>
        <fullName evidence="5">Glutathione S-transferase APIC</fullName>
        <ecNumber evidence="2">2.5.1.18</ecNumber>
    </recommendedName>
    <alternativeName>
        <fullName evidence="5">GST class-phi</fullName>
    </alternativeName>
</protein>
<proteinExistence type="evidence at transcript level"/>
<feature type="chain" id="PRO_0000185857" description="Glutathione S-transferase APIC">
    <location>
        <begin position="1"/>
        <end position="213"/>
    </location>
</feature>
<feature type="domain" description="GST N-terminal" evidence="3">
    <location>
        <begin position="1"/>
        <end position="82"/>
    </location>
</feature>
<feature type="domain" description="GST C-terminal" evidence="3">
    <location>
        <begin position="89"/>
        <end position="213"/>
    </location>
</feature>
<feature type="binding site" evidence="1">
    <location>
        <position position="11"/>
    </location>
    <ligand>
        <name>glutathione</name>
        <dbReference type="ChEBI" id="CHEBI:57925"/>
    </ligand>
</feature>
<feature type="binding site" evidence="2">
    <location>
        <begin position="12"/>
        <end position="13"/>
    </location>
    <ligand>
        <name>glutathione</name>
        <dbReference type="ChEBI" id="CHEBI:57925"/>
    </ligand>
</feature>
<feature type="binding site" evidence="2">
    <location>
        <begin position="40"/>
        <end position="41"/>
    </location>
    <ligand>
        <name>glutathione</name>
        <dbReference type="ChEBI" id="CHEBI:57925"/>
    </ligand>
</feature>
<feature type="binding site" evidence="2">
    <location>
        <begin position="53"/>
        <end position="54"/>
    </location>
    <ligand>
        <name>glutathione</name>
        <dbReference type="ChEBI" id="CHEBI:57925"/>
    </ligand>
</feature>
<feature type="binding site" evidence="2">
    <location>
        <begin position="66"/>
        <end position="67"/>
    </location>
    <ligand>
        <name>glutathione</name>
        <dbReference type="ChEBI" id="CHEBI:57925"/>
    </ligand>
</feature>
<evidence type="ECO:0000250" key="1"/>
<evidence type="ECO:0000250" key="2">
    <source>
        <dbReference type="UniProtKB" id="O80852"/>
    </source>
</evidence>
<evidence type="ECO:0000255" key="3"/>
<evidence type="ECO:0000269" key="4">
    <source ref="1"/>
</evidence>
<evidence type="ECO:0000303" key="5">
    <source ref="1"/>
</evidence>
<evidence type="ECO:0000305" key="6"/>
<organism>
    <name type="scientific">Nicotiana tabacum</name>
    <name type="common">Common tobacco</name>
    <dbReference type="NCBI Taxonomy" id="4097"/>
    <lineage>
        <taxon>Eukaryota</taxon>
        <taxon>Viridiplantae</taxon>
        <taxon>Streptophyta</taxon>
        <taxon>Embryophyta</taxon>
        <taxon>Tracheophyta</taxon>
        <taxon>Spermatophyta</taxon>
        <taxon>Magnoliopsida</taxon>
        <taxon>eudicotyledons</taxon>
        <taxon>Gunneridae</taxon>
        <taxon>Pentapetalae</taxon>
        <taxon>asterids</taxon>
        <taxon>lamiids</taxon>
        <taxon>Solanales</taxon>
        <taxon>Solanaceae</taxon>
        <taxon>Nicotianoideae</taxon>
        <taxon>Nicotianeae</taxon>
        <taxon>Nicotiana</taxon>
    </lineage>
</organism>
<name>GSTF2_TOBAC</name>
<reference key="1">
    <citation type="journal article" date="1995" name="Physiol. Plantarum">
        <title>Cloning and sequencing of the cDNAs induced by aluminium treatment and Pi starvation in cultured tobacco cells.</title>
        <authorList>
            <person name="Ezaki B."/>
            <person name="Yamamoto Y."/>
            <person name="Matsumoto H."/>
        </authorList>
    </citation>
    <scope>NUCLEOTIDE SEQUENCE [MRNA]</scope>
    <scope>INDUCTION BY ALUMINUM STRESS AND PHOSPHATE STARVATION</scope>
    <source>
        <strain>cv. Samsun</strain>
    </source>
</reference>
<gene>
    <name evidence="5" type="primary">APIC</name>
</gene>
<sequence length="213" mass="24113">MAIKVHGSPMSTATMRVAACLIEKDLDFELVPVDMVSGEHKKHPYLSLNPFGQVPAFEDGDLKLFESRAITQYIAHVYADNGYQLILQDPKKMPIMSVWMEVEGQKFEPHASKLTWELGIKPIIGMTTDDDAVKESEVQLSKVLDIYETRLAESKYLGGDSFTLVDLHHIPNIYYLMSTKVKEVFDSRPRVSAWCADILARPAWVKGLEKLQK</sequence>
<comment type="function">
    <text evidence="2">Conjugation of reduced glutathione to a wide number of exogenous and endogenous hydrophobic electrophiles.</text>
</comment>
<comment type="catalytic activity">
    <reaction evidence="2">
        <text>RX + glutathione = an S-substituted glutathione + a halide anion + H(+)</text>
        <dbReference type="Rhea" id="RHEA:16437"/>
        <dbReference type="ChEBI" id="CHEBI:15378"/>
        <dbReference type="ChEBI" id="CHEBI:16042"/>
        <dbReference type="ChEBI" id="CHEBI:17792"/>
        <dbReference type="ChEBI" id="CHEBI:57925"/>
        <dbReference type="ChEBI" id="CHEBI:90779"/>
        <dbReference type="EC" id="2.5.1.18"/>
    </reaction>
</comment>
<comment type="induction">
    <text evidence="4">By aluminum stress and phosphate starvation.</text>
</comment>
<comment type="similarity">
    <text evidence="6">Belongs to the GST superfamily. Phi family.</text>
</comment>
<dbReference type="EC" id="2.5.1.18" evidence="2"/>
<dbReference type="EMBL" id="D29680">
    <property type="protein sequence ID" value="BAA06150.1"/>
    <property type="molecule type" value="mRNA"/>
</dbReference>
<dbReference type="RefSeq" id="NP_001312208.1">
    <property type="nucleotide sequence ID" value="NM_001325279.1"/>
</dbReference>
<dbReference type="SMR" id="P46440"/>
<dbReference type="STRING" id="4097.P46440"/>
<dbReference type="PaxDb" id="4097-P46440"/>
<dbReference type="GeneID" id="107779283"/>
<dbReference type="KEGG" id="nta:107779283"/>
<dbReference type="OMA" id="AAYHNTV"/>
<dbReference type="OrthoDB" id="422574at2759"/>
<dbReference type="PhylomeDB" id="P46440"/>
<dbReference type="Proteomes" id="UP000084051">
    <property type="component" value="Unplaced"/>
</dbReference>
<dbReference type="GO" id="GO:0005737">
    <property type="term" value="C:cytoplasm"/>
    <property type="evidence" value="ECO:0000318"/>
    <property type="project" value="GO_Central"/>
</dbReference>
<dbReference type="GO" id="GO:0043295">
    <property type="term" value="F:glutathione binding"/>
    <property type="evidence" value="ECO:0000318"/>
    <property type="project" value="GO_Central"/>
</dbReference>
<dbReference type="GO" id="GO:0004364">
    <property type="term" value="F:glutathione transferase activity"/>
    <property type="evidence" value="ECO:0000318"/>
    <property type="project" value="GO_Central"/>
</dbReference>
<dbReference type="GO" id="GO:0006749">
    <property type="term" value="P:glutathione metabolic process"/>
    <property type="evidence" value="ECO:0000318"/>
    <property type="project" value="GO_Central"/>
</dbReference>
<dbReference type="GO" id="GO:0009407">
    <property type="term" value="P:toxin catabolic process"/>
    <property type="evidence" value="ECO:0007669"/>
    <property type="project" value="UniProtKB-ARBA"/>
</dbReference>
<dbReference type="CDD" id="cd03187">
    <property type="entry name" value="GST_C_Phi"/>
    <property type="match status" value="1"/>
</dbReference>
<dbReference type="CDD" id="cd03053">
    <property type="entry name" value="GST_N_Phi"/>
    <property type="match status" value="1"/>
</dbReference>
<dbReference type="FunFam" id="1.20.1050.10:FF:000004">
    <property type="entry name" value="Glutathione S-transferase F2"/>
    <property type="match status" value="1"/>
</dbReference>
<dbReference type="FunFam" id="3.40.30.10:FF:000016">
    <property type="entry name" value="Glutathione S-transferase F2"/>
    <property type="match status" value="1"/>
</dbReference>
<dbReference type="Gene3D" id="1.20.1050.10">
    <property type="match status" value="1"/>
</dbReference>
<dbReference type="Gene3D" id="3.40.30.10">
    <property type="entry name" value="Glutaredoxin"/>
    <property type="match status" value="1"/>
</dbReference>
<dbReference type="InterPro" id="IPR010987">
    <property type="entry name" value="Glutathione-S-Trfase_C-like"/>
</dbReference>
<dbReference type="InterPro" id="IPR036282">
    <property type="entry name" value="Glutathione-S-Trfase_C_sf"/>
</dbReference>
<dbReference type="InterPro" id="IPR040079">
    <property type="entry name" value="Glutathione_S-Trfase"/>
</dbReference>
<dbReference type="InterPro" id="IPR004045">
    <property type="entry name" value="Glutathione_S-Trfase_N"/>
</dbReference>
<dbReference type="InterPro" id="IPR004046">
    <property type="entry name" value="GST_C"/>
</dbReference>
<dbReference type="InterPro" id="IPR034347">
    <property type="entry name" value="GST_Phi_C"/>
</dbReference>
<dbReference type="InterPro" id="IPR036249">
    <property type="entry name" value="Thioredoxin-like_sf"/>
</dbReference>
<dbReference type="PANTHER" id="PTHR43900:SF47">
    <property type="entry name" value="GLUTATHIONE S-TRANSFERASE F6-RELATED"/>
    <property type="match status" value="1"/>
</dbReference>
<dbReference type="PANTHER" id="PTHR43900">
    <property type="entry name" value="GLUTATHIONE S-TRANSFERASE RHO"/>
    <property type="match status" value="1"/>
</dbReference>
<dbReference type="Pfam" id="PF00043">
    <property type="entry name" value="GST_C"/>
    <property type="match status" value="1"/>
</dbReference>
<dbReference type="Pfam" id="PF02798">
    <property type="entry name" value="GST_N"/>
    <property type="match status" value="1"/>
</dbReference>
<dbReference type="SFLD" id="SFLDS00019">
    <property type="entry name" value="Glutathione_Transferase_(cytos"/>
    <property type="match status" value="1"/>
</dbReference>
<dbReference type="SFLD" id="SFLDG01154">
    <property type="entry name" value="Main.5:_Phi-like"/>
    <property type="match status" value="1"/>
</dbReference>
<dbReference type="SUPFAM" id="SSF47616">
    <property type="entry name" value="GST C-terminal domain-like"/>
    <property type="match status" value="1"/>
</dbReference>
<dbReference type="SUPFAM" id="SSF52833">
    <property type="entry name" value="Thioredoxin-like"/>
    <property type="match status" value="1"/>
</dbReference>
<dbReference type="PROSITE" id="PS50405">
    <property type="entry name" value="GST_CTER"/>
    <property type="match status" value="1"/>
</dbReference>
<dbReference type="PROSITE" id="PS50404">
    <property type="entry name" value="GST_NTER"/>
    <property type="match status" value="1"/>
</dbReference>